<feature type="signal peptide" evidence="1">
    <location>
        <begin position="1"/>
        <end position="17"/>
    </location>
</feature>
<feature type="chain" id="PRO_0000462162" description="Unknown 12C protein" evidence="1">
    <location>
        <begin position="18"/>
        <end position="123"/>
    </location>
</feature>
<sequence>MMSALFLVLSVSLLVSGLQGIGEATSEIKESPLCSLMEERLPDLCEVQVKIDPHYCQDHFSSCPRTCLRCKRPQKPPAPPRECKDLRTDCPRAMHSYGMDICREMSSYASMYCKSYCKLCNKR</sequence>
<gene>
    <name evidence="3" type="ORF">c44161_g1_i1</name>
</gene>
<protein>
    <recommendedName>
        <fullName evidence="3">Unknown 12C protein</fullName>
    </recommendedName>
</protein>
<comment type="function">
    <text evidence="5">Cysteine-rich protein with probable toxin activity.</text>
</comment>
<comment type="subcellular location">
    <subcellularLocation>
        <location evidence="2">Secreted</location>
    </subcellularLocation>
    <subcellularLocation>
        <location evidence="4">Nematocyst</location>
    </subcellularLocation>
</comment>
<comment type="tissue specificity">
    <text evidence="2">Expressed in acontia, a specialised envenomation structure laden with batteries of venom-containing nematocysts found only in the superfamily Metridioidea.</text>
</comment>
<comment type="PTM">
    <text evidence="4">Contains 6 disulfide bonds.</text>
</comment>
<proteinExistence type="evidence at protein level"/>
<name>U12C_CALPY</name>
<accession>P0DY40</accession>
<organism>
    <name type="scientific">Calliactis polypus</name>
    <name type="common">Hermit crab anemone</name>
    <name type="synonym">Priapus polypus</name>
    <dbReference type="NCBI Taxonomy" id="656064"/>
    <lineage>
        <taxon>Eukaryota</taxon>
        <taxon>Metazoa</taxon>
        <taxon>Cnidaria</taxon>
        <taxon>Anthozoa</taxon>
        <taxon>Hexacorallia</taxon>
        <taxon>Actiniaria</taxon>
        <taxon>Nynantheae</taxon>
        <taxon>Hormathiidae</taxon>
        <taxon>Calliactis</taxon>
    </lineage>
</organism>
<keyword id="KW-1015">Disulfide bond</keyword>
<keyword id="KW-0166">Nematocyst</keyword>
<keyword id="KW-0964">Secreted</keyword>
<keyword id="KW-0732">Signal</keyword>
<keyword id="KW-0800">Toxin</keyword>
<evidence type="ECO:0000255" key="1"/>
<evidence type="ECO:0000269" key="2">
    <source>
    </source>
</evidence>
<evidence type="ECO:0000303" key="3">
    <source>
    </source>
</evidence>
<evidence type="ECO:0000305" key="4"/>
<evidence type="ECO:0000305" key="5">
    <source>
    </source>
</evidence>
<reference key="1">
    <citation type="journal article" date="2023" name="Toxins">
        <title>Acontia, a specialised defensive structure, has low venom complexity in Calliactis polypus.</title>
        <authorList>
            <person name="Smith H.L."/>
            <person name="Prentis P.J."/>
            <person name="Bryan S.E."/>
            <person name="Norton R.S."/>
            <person name="Broszczak D.A."/>
        </authorList>
    </citation>
    <scope>NUCLEOTIDE SEQUENCE [MRNA]</scope>
    <scope>IDENTIFICATION BY MASS SPECTROMETRY</scope>
    <scope>SUBCELLULAR LOCATION</scope>
    <scope>TISSUE SPECIFICITY</scope>
</reference>